<name>SAPA_SALTY</name>
<comment type="function">
    <text evidence="2">Involved in a peptide intake transport system that plays a role in the resistance to antimicrobial peptides.</text>
</comment>
<comment type="subcellular location">
    <subcellularLocation>
        <location evidence="4">Periplasm</location>
    </subcellularLocation>
</comment>
<comment type="induction">
    <text evidence="2">Part of the sapA-sapB-sapC-sapD-sapF operon, RNA detected in mid-log phase cells.</text>
</comment>
<comment type="disruption phenotype">
    <text evidence="2">More senstitive to protamine than wild-type cells, but not as sensitive as sapC, sapD or sapF deletions.</text>
</comment>
<comment type="similarity">
    <text evidence="4">Belongs to the bacterial solute-binding protein 5 family.</text>
</comment>
<evidence type="ECO:0000255" key="1"/>
<evidence type="ECO:0000269" key="2">
    <source>
    </source>
</evidence>
<evidence type="ECO:0000303" key="3">
    <source>
    </source>
</evidence>
<evidence type="ECO:0000305" key="4"/>
<feature type="signal peptide" evidence="1">
    <location>
        <begin position="1"/>
        <end position="21"/>
    </location>
</feature>
<feature type="chain" id="PRO_0000031802" description="Peptide transport periplasmic protein SapA">
    <location>
        <begin position="22"/>
        <end position="549"/>
    </location>
</feature>
<feature type="sequence conflict" description="In Ref. 1; CAA52284." evidence="4" ref="1">
    <original>KL</original>
    <variation>NV</variation>
    <location>
        <begin position="164"/>
        <end position="165"/>
    </location>
</feature>
<protein>
    <recommendedName>
        <fullName>Peptide transport periplasmic protein SapA</fullName>
    </recommendedName>
</protein>
<gene>
    <name evidence="3" type="primary">sapA</name>
    <name type="ordered locus">STM1692</name>
</gene>
<accession>P36634</accession>
<organism>
    <name type="scientific">Salmonella typhimurium (strain LT2 / SGSC1412 / ATCC 700720)</name>
    <dbReference type="NCBI Taxonomy" id="99287"/>
    <lineage>
        <taxon>Bacteria</taxon>
        <taxon>Pseudomonadati</taxon>
        <taxon>Pseudomonadota</taxon>
        <taxon>Gammaproteobacteria</taxon>
        <taxon>Enterobacterales</taxon>
        <taxon>Enterobacteriaceae</taxon>
        <taxon>Salmonella</taxon>
    </lineage>
</organism>
<reference key="1">
    <citation type="journal article" date="1993" name="EMBO J.">
        <title>Molecular genetic analysis of a locus required for resistance to antimicrobial peptides in Salmonella typhimurium.</title>
        <authorList>
            <person name="Parra-Lopez C."/>
            <person name="Baer M.T."/>
            <person name="Groisman E.A."/>
        </authorList>
    </citation>
    <scope>NUCLEOTIDE SEQUENCE [GENOMIC DNA]</scope>
    <scope>FUNCTION</scope>
    <scope>OPERON STRUCTURE</scope>
    <scope>DISRUPTION PHENOTYPE</scope>
    <source>
        <strain>ATCC 14028s / SGSG 2262</strain>
    </source>
</reference>
<reference key="2">
    <citation type="journal article" date="2001" name="Nature">
        <title>Complete genome sequence of Salmonella enterica serovar Typhimurium LT2.</title>
        <authorList>
            <person name="McClelland M."/>
            <person name="Sanderson K.E."/>
            <person name="Spieth J."/>
            <person name="Clifton S.W."/>
            <person name="Latreille P."/>
            <person name="Courtney L."/>
            <person name="Porwollik S."/>
            <person name="Ali J."/>
            <person name="Dante M."/>
            <person name="Du F."/>
            <person name="Hou S."/>
            <person name="Layman D."/>
            <person name="Leonard S."/>
            <person name="Nguyen C."/>
            <person name="Scott K."/>
            <person name="Holmes A."/>
            <person name="Grewal N."/>
            <person name="Mulvaney E."/>
            <person name="Ryan E."/>
            <person name="Sun H."/>
            <person name="Florea L."/>
            <person name="Miller W."/>
            <person name="Stoneking T."/>
            <person name="Nhan M."/>
            <person name="Waterston R."/>
            <person name="Wilson R.K."/>
        </authorList>
    </citation>
    <scope>NUCLEOTIDE SEQUENCE [LARGE SCALE GENOMIC DNA]</scope>
    <source>
        <strain>LT2 / SGSC1412 / ATCC 700720</strain>
    </source>
</reference>
<sequence length="549" mass="61651">MRLVLSSLIVIAGLLSSQATAATAPEQTASADIRDSGFVYCVSGQVNTFNPQKASSGLIVDTLAAQLYDRLLDVDPYTYRLVPELAESWEVLDNGATYRFHLRRDVSFQKTAWFTPTRKLNADDVVFTFQRIFDRRHPWHNINGSSFPYFDSLQFADNVKSVRKLDNNTVEFRLTQPDASFLWHLATHYASVMSAEYAAQLSRKDRQELLDRQPVGTGPFQLSEYRAGQFIRLQRHDGFWRGKPLMPQVVVDLGSGGTGRLSKLLTGECDVLAWPAASQLTILRDDPRLRLTLRPGMNIAYLAFNTDKPPLNNPAVRHALALSINNQRLMQSIYYGTAETAASILPRASWAYDNDAKITEYNPQKSREQLKALGIENLTLHLWVPTSSQAWNPSPLKTAELIQADMAQVGVKVVIVPVEGRFQEARLMDMNHDLTLSGWATDSNDPDSFFRPLLSCAAINSQTNFAHWCNPEFDSVLRKALSSQQLASRIEAYEEAQNILEKELPILPLASSLRLQAYRYDIKGLVLSPFGNASFAGVSREKHEEVKKP</sequence>
<keyword id="KW-0571">Peptide transport</keyword>
<keyword id="KW-0574">Periplasm</keyword>
<keyword id="KW-0653">Protein transport</keyword>
<keyword id="KW-1185">Reference proteome</keyword>
<keyword id="KW-0732">Signal</keyword>
<keyword id="KW-0813">Transport</keyword>
<proteinExistence type="evidence at transcript level"/>
<dbReference type="EMBL" id="X74212">
    <property type="protein sequence ID" value="CAA52284.1"/>
    <property type="molecule type" value="Genomic_DNA"/>
</dbReference>
<dbReference type="EMBL" id="AE006468">
    <property type="protein sequence ID" value="AAL20609.1"/>
    <property type="molecule type" value="Genomic_DNA"/>
</dbReference>
<dbReference type="PIR" id="S39585">
    <property type="entry name" value="S39585"/>
</dbReference>
<dbReference type="RefSeq" id="NP_460650.1">
    <property type="nucleotide sequence ID" value="NC_003197.2"/>
</dbReference>
<dbReference type="RefSeq" id="WP_001241629.1">
    <property type="nucleotide sequence ID" value="NC_003197.2"/>
</dbReference>
<dbReference type="SMR" id="P36634"/>
<dbReference type="STRING" id="99287.STM1692"/>
<dbReference type="TCDB" id="3.A.1.5.5">
    <property type="family name" value="the atp-binding cassette (abc) superfamily"/>
</dbReference>
<dbReference type="PaxDb" id="99287-STM1692"/>
<dbReference type="GeneID" id="1253210"/>
<dbReference type="KEGG" id="stm:STM1692"/>
<dbReference type="PATRIC" id="fig|99287.12.peg.1786"/>
<dbReference type="HOGENOM" id="CLU_017028_7_0_6"/>
<dbReference type="OMA" id="HPWHNVN"/>
<dbReference type="PhylomeDB" id="P36634"/>
<dbReference type="BioCyc" id="SENT99287:STM1692-MONOMER"/>
<dbReference type="Proteomes" id="UP000001014">
    <property type="component" value="Chromosome"/>
</dbReference>
<dbReference type="GO" id="GO:0043190">
    <property type="term" value="C:ATP-binding cassette (ABC) transporter complex"/>
    <property type="evidence" value="ECO:0007669"/>
    <property type="project" value="InterPro"/>
</dbReference>
<dbReference type="GO" id="GO:0030288">
    <property type="term" value="C:outer membrane-bounded periplasmic space"/>
    <property type="evidence" value="ECO:0007669"/>
    <property type="project" value="UniProtKB-ARBA"/>
</dbReference>
<dbReference type="GO" id="GO:1904680">
    <property type="term" value="F:peptide transmembrane transporter activity"/>
    <property type="evidence" value="ECO:0000318"/>
    <property type="project" value="GO_Central"/>
</dbReference>
<dbReference type="GO" id="GO:0015833">
    <property type="term" value="P:peptide transport"/>
    <property type="evidence" value="ECO:0000318"/>
    <property type="project" value="GO_Central"/>
</dbReference>
<dbReference type="GO" id="GO:0015031">
    <property type="term" value="P:protein transport"/>
    <property type="evidence" value="ECO:0007669"/>
    <property type="project" value="UniProtKB-KW"/>
</dbReference>
<dbReference type="CDD" id="cd08493">
    <property type="entry name" value="PBP2_DppA_like"/>
    <property type="match status" value="1"/>
</dbReference>
<dbReference type="FunFam" id="3.10.105.10:FF:000004">
    <property type="entry name" value="Peptide ABC transporter substrate-binding protein SapA"/>
    <property type="match status" value="1"/>
</dbReference>
<dbReference type="FunFam" id="3.90.76.10:FF:000005">
    <property type="entry name" value="Peptide ABC transporter substrate-binding protein SapA"/>
    <property type="match status" value="1"/>
</dbReference>
<dbReference type="Gene3D" id="3.90.76.10">
    <property type="entry name" value="Dipeptide-binding Protein, Domain 1"/>
    <property type="match status" value="1"/>
</dbReference>
<dbReference type="Gene3D" id="3.10.105.10">
    <property type="entry name" value="Dipeptide-binding Protein, Domain 3"/>
    <property type="match status" value="1"/>
</dbReference>
<dbReference type="Gene3D" id="3.40.190.10">
    <property type="entry name" value="Periplasmic binding protein-like II"/>
    <property type="match status" value="1"/>
</dbReference>
<dbReference type="InterPro" id="IPR030678">
    <property type="entry name" value="Peptide/Ni-bd"/>
</dbReference>
<dbReference type="InterPro" id="IPR039424">
    <property type="entry name" value="SBP_5"/>
</dbReference>
<dbReference type="InterPro" id="IPR023765">
    <property type="entry name" value="SBP_5_CS"/>
</dbReference>
<dbReference type="InterPro" id="IPR000914">
    <property type="entry name" value="SBP_5_dom"/>
</dbReference>
<dbReference type="NCBIfam" id="NF011689">
    <property type="entry name" value="PRK15109.1"/>
    <property type="match status" value="1"/>
</dbReference>
<dbReference type="PANTHER" id="PTHR30290:SF28">
    <property type="entry name" value="ABC TRANSPORTER PERIPLASMIC-BINDING PROTEIN SAPA-RELATED"/>
    <property type="match status" value="1"/>
</dbReference>
<dbReference type="PANTHER" id="PTHR30290">
    <property type="entry name" value="PERIPLASMIC BINDING COMPONENT OF ABC TRANSPORTER"/>
    <property type="match status" value="1"/>
</dbReference>
<dbReference type="Pfam" id="PF00496">
    <property type="entry name" value="SBP_bac_5"/>
    <property type="match status" value="1"/>
</dbReference>
<dbReference type="PIRSF" id="PIRSF002741">
    <property type="entry name" value="MppA"/>
    <property type="match status" value="1"/>
</dbReference>
<dbReference type="SUPFAM" id="SSF53850">
    <property type="entry name" value="Periplasmic binding protein-like II"/>
    <property type="match status" value="1"/>
</dbReference>
<dbReference type="PROSITE" id="PS01040">
    <property type="entry name" value="SBP_BACTERIAL_5"/>
    <property type="match status" value="1"/>
</dbReference>